<feature type="chain" id="PRO_0000173144" description="Large ribosomal subunit protein bL31">
    <location>
        <begin position="1"/>
        <end position="94"/>
    </location>
</feature>
<feature type="region of interest" description="Disordered" evidence="2">
    <location>
        <begin position="64"/>
        <end position="94"/>
    </location>
</feature>
<feature type="compositionally biased region" description="Basic and acidic residues" evidence="2">
    <location>
        <begin position="73"/>
        <end position="94"/>
    </location>
</feature>
<sequence>MPKKDIHPNWYPDAKVICNGEVVMTTGSTQPEIHVDVWSGNHPFFTGTQKILDTEGRVDRFMRKYGMANPDEDSTKNTKSSKKETSEDSSSKGS</sequence>
<dbReference type="EMBL" id="AE017126">
    <property type="protein sequence ID" value="AAQ00728.1"/>
    <property type="molecule type" value="Genomic_DNA"/>
</dbReference>
<dbReference type="RefSeq" id="NP_876075.1">
    <property type="nucleotide sequence ID" value="NC_005042.1"/>
</dbReference>
<dbReference type="RefSeq" id="WP_011125833.1">
    <property type="nucleotide sequence ID" value="NC_005042.1"/>
</dbReference>
<dbReference type="STRING" id="167539.Pro_1684"/>
<dbReference type="EnsemblBacteria" id="AAQ00728">
    <property type="protein sequence ID" value="AAQ00728"/>
    <property type="gene ID" value="Pro_1684"/>
</dbReference>
<dbReference type="KEGG" id="pma:Pro_1684"/>
<dbReference type="PATRIC" id="fig|167539.5.peg.1778"/>
<dbReference type="eggNOG" id="COG0254">
    <property type="taxonomic scope" value="Bacteria"/>
</dbReference>
<dbReference type="HOGENOM" id="CLU_114306_1_2_3"/>
<dbReference type="OrthoDB" id="9803251at2"/>
<dbReference type="Proteomes" id="UP000001420">
    <property type="component" value="Chromosome"/>
</dbReference>
<dbReference type="GO" id="GO:1990904">
    <property type="term" value="C:ribonucleoprotein complex"/>
    <property type="evidence" value="ECO:0007669"/>
    <property type="project" value="UniProtKB-KW"/>
</dbReference>
<dbReference type="GO" id="GO:0005840">
    <property type="term" value="C:ribosome"/>
    <property type="evidence" value="ECO:0007669"/>
    <property type="project" value="UniProtKB-KW"/>
</dbReference>
<dbReference type="GO" id="GO:0019843">
    <property type="term" value="F:rRNA binding"/>
    <property type="evidence" value="ECO:0007669"/>
    <property type="project" value="UniProtKB-KW"/>
</dbReference>
<dbReference type="GO" id="GO:0003735">
    <property type="term" value="F:structural constituent of ribosome"/>
    <property type="evidence" value="ECO:0007669"/>
    <property type="project" value="InterPro"/>
</dbReference>
<dbReference type="GO" id="GO:0006412">
    <property type="term" value="P:translation"/>
    <property type="evidence" value="ECO:0007669"/>
    <property type="project" value="UniProtKB-UniRule"/>
</dbReference>
<dbReference type="Gene3D" id="4.10.830.30">
    <property type="entry name" value="Ribosomal protein L31"/>
    <property type="match status" value="1"/>
</dbReference>
<dbReference type="HAMAP" id="MF_00501">
    <property type="entry name" value="Ribosomal_bL31_1"/>
    <property type="match status" value="1"/>
</dbReference>
<dbReference type="InterPro" id="IPR034704">
    <property type="entry name" value="Ribosomal_bL28/bL31-like_sf"/>
</dbReference>
<dbReference type="InterPro" id="IPR002150">
    <property type="entry name" value="Ribosomal_bL31"/>
</dbReference>
<dbReference type="InterPro" id="IPR027491">
    <property type="entry name" value="Ribosomal_bL31_A"/>
</dbReference>
<dbReference type="InterPro" id="IPR042105">
    <property type="entry name" value="Ribosomal_bL31_sf"/>
</dbReference>
<dbReference type="NCBIfam" id="TIGR00105">
    <property type="entry name" value="L31"/>
    <property type="match status" value="1"/>
</dbReference>
<dbReference type="NCBIfam" id="NF000612">
    <property type="entry name" value="PRK00019.1"/>
    <property type="match status" value="1"/>
</dbReference>
<dbReference type="NCBIfam" id="NF001809">
    <property type="entry name" value="PRK00528.1"/>
    <property type="match status" value="1"/>
</dbReference>
<dbReference type="PANTHER" id="PTHR33280">
    <property type="entry name" value="50S RIBOSOMAL PROTEIN L31, CHLOROPLASTIC"/>
    <property type="match status" value="1"/>
</dbReference>
<dbReference type="PANTHER" id="PTHR33280:SF1">
    <property type="entry name" value="LARGE RIBOSOMAL SUBUNIT PROTEIN BL31C"/>
    <property type="match status" value="1"/>
</dbReference>
<dbReference type="Pfam" id="PF01197">
    <property type="entry name" value="Ribosomal_L31"/>
    <property type="match status" value="1"/>
</dbReference>
<dbReference type="PRINTS" id="PR01249">
    <property type="entry name" value="RIBOSOMALL31"/>
</dbReference>
<dbReference type="SUPFAM" id="SSF143800">
    <property type="entry name" value="L28p-like"/>
    <property type="match status" value="1"/>
</dbReference>
<dbReference type="PROSITE" id="PS01143">
    <property type="entry name" value="RIBOSOMAL_L31"/>
    <property type="match status" value="1"/>
</dbReference>
<name>RL31_PROMA</name>
<reference key="1">
    <citation type="journal article" date="2003" name="Proc. Natl. Acad. Sci. U.S.A.">
        <title>Genome sequence of the cyanobacterium Prochlorococcus marinus SS120, a nearly minimal oxyphototrophic genome.</title>
        <authorList>
            <person name="Dufresne A."/>
            <person name="Salanoubat M."/>
            <person name="Partensky F."/>
            <person name="Artiguenave F."/>
            <person name="Axmann I.M."/>
            <person name="Barbe V."/>
            <person name="Duprat S."/>
            <person name="Galperin M.Y."/>
            <person name="Koonin E.V."/>
            <person name="Le Gall F."/>
            <person name="Makarova K.S."/>
            <person name="Ostrowski M."/>
            <person name="Oztas S."/>
            <person name="Robert C."/>
            <person name="Rogozin I.B."/>
            <person name="Scanlan D.J."/>
            <person name="Tandeau de Marsac N."/>
            <person name="Weissenbach J."/>
            <person name="Wincker P."/>
            <person name="Wolf Y.I."/>
            <person name="Hess W.R."/>
        </authorList>
    </citation>
    <scope>NUCLEOTIDE SEQUENCE [LARGE SCALE GENOMIC DNA]</scope>
    <source>
        <strain>SARG / CCMP1375 / SS120</strain>
    </source>
</reference>
<protein>
    <recommendedName>
        <fullName evidence="1">Large ribosomal subunit protein bL31</fullName>
    </recommendedName>
    <alternativeName>
        <fullName evidence="3">50S ribosomal protein L31</fullName>
    </alternativeName>
</protein>
<comment type="function">
    <text evidence="1">Binds the 23S rRNA.</text>
</comment>
<comment type="subunit">
    <text evidence="1">Part of the 50S ribosomal subunit.</text>
</comment>
<comment type="similarity">
    <text evidence="1">Belongs to the bacterial ribosomal protein bL31 family. Type A subfamily.</text>
</comment>
<evidence type="ECO:0000255" key="1">
    <source>
        <dbReference type="HAMAP-Rule" id="MF_00501"/>
    </source>
</evidence>
<evidence type="ECO:0000256" key="2">
    <source>
        <dbReference type="SAM" id="MobiDB-lite"/>
    </source>
</evidence>
<evidence type="ECO:0000305" key="3"/>
<gene>
    <name evidence="1" type="primary">rpmE</name>
    <name evidence="1" type="synonym">rpl31</name>
    <name type="ordered locus">Pro_1684</name>
</gene>
<keyword id="KW-1185">Reference proteome</keyword>
<keyword id="KW-0687">Ribonucleoprotein</keyword>
<keyword id="KW-0689">Ribosomal protein</keyword>
<keyword id="KW-0694">RNA-binding</keyword>
<keyword id="KW-0699">rRNA-binding</keyword>
<organism>
    <name type="scientific">Prochlorococcus marinus (strain SARG / CCMP1375 / SS120)</name>
    <dbReference type="NCBI Taxonomy" id="167539"/>
    <lineage>
        <taxon>Bacteria</taxon>
        <taxon>Bacillati</taxon>
        <taxon>Cyanobacteriota</taxon>
        <taxon>Cyanophyceae</taxon>
        <taxon>Synechococcales</taxon>
        <taxon>Prochlorococcaceae</taxon>
        <taxon>Prochlorococcus</taxon>
    </lineage>
</organism>
<accession>Q7V9Y9</accession>
<proteinExistence type="inferred from homology"/>